<proteinExistence type="evidence at protein level"/>
<evidence type="ECO:0000255" key="1"/>
<evidence type="ECO:0000269" key="2">
    <source>
    </source>
</evidence>
<evidence type="ECO:0000305" key="3"/>
<evidence type="ECO:0000305" key="4">
    <source>
    </source>
</evidence>
<evidence type="ECO:0000312" key="5">
    <source>
        <dbReference type="EMBL" id="AAG05013.1"/>
    </source>
</evidence>
<evidence type="ECO:0007744" key="6">
    <source>
        <dbReference type="PDB" id="6TD9"/>
    </source>
</evidence>
<evidence type="ECO:0007829" key="7">
    <source>
        <dbReference type="PDB" id="6TD9"/>
    </source>
</evidence>
<name>Y1624_PSEAE</name>
<reference key="1">
    <citation type="journal article" date="2000" name="Nature">
        <title>Complete genome sequence of Pseudomonas aeruginosa PAO1, an opportunistic pathogen.</title>
        <authorList>
            <person name="Stover C.K."/>
            <person name="Pham X.-Q.T."/>
            <person name="Erwin A.L."/>
            <person name="Mizoguchi S.D."/>
            <person name="Warrener P."/>
            <person name="Hickey M.J."/>
            <person name="Brinkman F.S.L."/>
            <person name="Hufnagle W.O."/>
            <person name="Kowalik D.J."/>
            <person name="Lagrou M."/>
            <person name="Garber R.L."/>
            <person name="Goltry L."/>
            <person name="Tolentino E."/>
            <person name="Westbrock-Wadman S."/>
            <person name="Yuan Y."/>
            <person name="Brody L.L."/>
            <person name="Coulter S.N."/>
            <person name="Folger K.R."/>
            <person name="Kas A."/>
            <person name="Larbig K."/>
            <person name="Lim R.M."/>
            <person name="Smith K.A."/>
            <person name="Spencer D.H."/>
            <person name="Wong G.K.-S."/>
            <person name="Wu Z."/>
            <person name="Paulsen I.T."/>
            <person name="Reizer J."/>
            <person name="Saier M.H. Jr."/>
            <person name="Hancock R.E.W."/>
            <person name="Lory S."/>
            <person name="Olson M.V."/>
        </authorList>
    </citation>
    <scope>NUCLEOTIDE SEQUENCE [LARGE SCALE GENOMIC DNA]</scope>
    <source>
        <strain>ATCC 15692 / DSM 22644 / CIP 104116 / JCM 14847 / LMG 12228 / 1C / PRS 101 / PAO1</strain>
    </source>
</reference>
<reference evidence="6" key="2">
    <citation type="journal article" date="2020" name="Acta Crystallogr. F Struct. Biol. Commun.">
        <title>The hypothetical periplasmic protein PA1624 from Pseudomonas aeruginosa folds into a unique two-domain structure.</title>
        <authorList>
            <person name="Feiler C.G."/>
            <person name="Weiss M.S."/>
            <person name="Blankenfeldt W."/>
        </authorList>
    </citation>
    <scope>X-RAY CRYSTALLOGRAPHY (1.96 ANGSTROMS) OF 19-268</scope>
    <scope>SUBUNIT</scope>
    <scope>SUBCELLULAR LOCATION</scope>
    <scope>DOMAIN</scope>
    <scope>DISULFIDE BOND</scope>
    <source>
        <strain>ATCC 15692 / DSM 22644 / CIP 104116 / JCM 14847 / LMG 12228 / 1C / PRS 101 / PAO1</strain>
    </source>
</reference>
<organism>
    <name type="scientific">Pseudomonas aeruginosa (strain ATCC 15692 / DSM 22644 / CIP 104116 / JCM 14847 / LMG 12228 / 1C / PRS 101 / PAO1)</name>
    <dbReference type="NCBI Taxonomy" id="208964"/>
    <lineage>
        <taxon>Bacteria</taxon>
        <taxon>Pseudomonadati</taxon>
        <taxon>Pseudomonadota</taxon>
        <taxon>Gammaproteobacteria</taxon>
        <taxon>Pseudomonadales</taxon>
        <taxon>Pseudomonadaceae</taxon>
        <taxon>Pseudomonas</taxon>
    </lineage>
</organism>
<gene>
    <name evidence="5" type="ordered locus">PA1624</name>
</gene>
<sequence>MRGFLLLSLGVFSFSALAADLPGSHDLDILPRFPRAEIVDFRQAPSEERIYPLGAISRISGRLRMEGEVRAEGELTALTYRLPPEHSSQEAFAAARTALLKADATPLFWCERRDCGSSSLLANAVFGNAKLYGPDEQQAYLLVRLAAPQENSLVAVYSITRGNRRAYLQAEELKADAPLAELLPSPATLLRLLKANGELTLSHVPAEPAGSWLELLVRTLRLDTGVRVELSGKHAQEWRDALRGQGVLNSRMELGQSEVEGLHLNWLR</sequence>
<comment type="subunit">
    <text evidence="2">Monomer.</text>
</comment>
<comment type="subcellular location">
    <subcellularLocation>
        <location evidence="4">Periplasm</location>
    </subcellularLocation>
</comment>
<comment type="domain">
    <text evidence="2">Folds into a unique two-domain structure. The structure consists of two domains, domains 1 and 2, which are connected via a long linker. The interior of the C-terminal domain is not optimally packed, leaving a cavity lined by hydrophobic residues unoccupied. This cavity may sequester a hydrophobic ligand.</text>
</comment>
<comment type="miscellaneous">
    <text evidence="4">Was identified as a potential drug target.</text>
</comment>
<keyword id="KW-0002">3D-structure</keyword>
<keyword id="KW-1015">Disulfide bond</keyword>
<keyword id="KW-0574">Periplasm</keyword>
<keyword id="KW-1185">Reference proteome</keyword>
<keyword id="KW-0732">Signal</keyword>
<protein>
    <recommendedName>
        <fullName evidence="3">Uncharacterized protein PA1624</fullName>
    </recommendedName>
</protein>
<dbReference type="EMBL" id="AE004091">
    <property type="protein sequence ID" value="AAG05013.1"/>
    <property type="molecule type" value="Genomic_DNA"/>
</dbReference>
<dbReference type="PIR" id="C83442">
    <property type="entry name" value="C83442"/>
</dbReference>
<dbReference type="RefSeq" id="NP_250315.1">
    <property type="nucleotide sequence ID" value="NC_002516.2"/>
</dbReference>
<dbReference type="RefSeq" id="WP_003097863.1">
    <property type="nucleotide sequence ID" value="NZ_QZGE01000003.1"/>
</dbReference>
<dbReference type="PDB" id="6TD9">
    <property type="method" value="X-ray"/>
    <property type="resolution" value="1.96 A"/>
    <property type="chains" value="A/B=19-268"/>
</dbReference>
<dbReference type="PDBsum" id="6TD9"/>
<dbReference type="SMR" id="Q9I398"/>
<dbReference type="STRING" id="208964.PA1624"/>
<dbReference type="PaxDb" id="208964-PA1624"/>
<dbReference type="DNASU" id="881888"/>
<dbReference type="GeneID" id="881888"/>
<dbReference type="KEGG" id="pae:PA1624"/>
<dbReference type="PATRIC" id="fig|208964.12.peg.1684"/>
<dbReference type="PseudoCAP" id="PA1624"/>
<dbReference type="HOGENOM" id="CLU_080669_0_0_6"/>
<dbReference type="InParanoid" id="Q9I398"/>
<dbReference type="OrthoDB" id="5741786at2"/>
<dbReference type="PhylomeDB" id="Q9I398"/>
<dbReference type="BioCyc" id="PAER208964:G1FZ6-1654-MONOMER"/>
<dbReference type="Proteomes" id="UP000002438">
    <property type="component" value="Chromosome"/>
</dbReference>
<dbReference type="GO" id="GO:0042597">
    <property type="term" value="C:periplasmic space"/>
    <property type="evidence" value="ECO:0007669"/>
    <property type="project" value="UniProtKB-SubCell"/>
</dbReference>
<dbReference type="InterPro" id="IPR032608">
    <property type="entry name" value="DUF4892"/>
</dbReference>
<dbReference type="Pfam" id="PF16234">
    <property type="entry name" value="DUF4892"/>
    <property type="match status" value="1"/>
</dbReference>
<feature type="signal peptide" evidence="1">
    <location>
        <begin position="1"/>
        <end position="18"/>
    </location>
</feature>
<feature type="chain" id="PRO_5004327441" description="Uncharacterized protein PA1624" evidence="1">
    <location>
        <begin position="19"/>
        <end position="268"/>
    </location>
</feature>
<feature type="region of interest" description="Domain 1" evidence="2">
    <location>
        <begin position="24"/>
        <end position="184"/>
    </location>
</feature>
<feature type="region of interest" description="Domain 2" evidence="2">
    <location>
        <begin position="185"/>
        <end position="268"/>
    </location>
</feature>
<feature type="disulfide bond" evidence="2 6">
    <location>
        <begin position="110"/>
        <end position="115"/>
    </location>
</feature>
<feature type="strand" evidence="7">
    <location>
        <begin position="37"/>
        <end position="54"/>
    </location>
</feature>
<feature type="strand" evidence="7">
    <location>
        <begin position="56"/>
        <end position="59"/>
    </location>
</feature>
<feature type="strand" evidence="7">
    <location>
        <begin position="62"/>
        <end position="81"/>
    </location>
</feature>
<feature type="helix" evidence="7">
    <location>
        <begin position="88"/>
        <end position="101"/>
    </location>
</feature>
<feature type="strand" evidence="7">
    <location>
        <begin position="105"/>
        <end position="111"/>
    </location>
</feature>
<feature type="helix" evidence="7">
    <location>
        <begin position="112"/>
        <end position="115"/>
    </location>
</feature>
<feature type="helix" evidence="7">
    <location>
        <begin position="118"/>
        <end position="123"/>
    </location>
</feature>
<feature type="helix" evidence="7">
    <location>
        <begin position="129"/>
        <end position="131"/>
    </location>
</feature>
<feature type="helix" evidence="7">
    <location>
        <begin position="135"/>
        <end position="137"/>
    </location>
</feature>
<feature type="strand" evidence="7">
    <location>
        <begin position="139"/>
        <end position="144"/>
    </location>
</feature>
<feature type="strand" evidence="7">
    <location>
        <begin position="152"/>
        <end position="160"/>
    </location>
</feature>
<feature type="strand" evidence="7">
    <location>
        <begin position="166"/>
        <end position="177"/>
    </location>
</feature>
<feature type="helix" evidence="7">
    <location>
        <begin position="186"/>
        <end position="196"/>
    </location>
</feature>
<feature type="strand" evidence="7">
    <location>
        <begin position="197"/>
        <end position="201"/>
    </location>
</feature>
<feature type="helix" evidence="7">
    <location>
        <begin position="210"/>
        <end position="222"/>
    </location>
</feature>
<feature type="strand" evidence="7">
    <location>
        <begin position="223"/>
        <end position="225"/>
    </location>
</feature>
<feature type="strand" evidence="7">
    <location>
        <begin position="227"/>
        <end position="232"/>
    </location>
</feature>
<feature type="helix" evidence="7">
    <location>
        <begin position="235"/>
        <end position="244"/>
    </location>
</feature>
<feature type="helix" evidence="7">
    <location>
        <begin position="249"/>
        <end position="251"/>
    </location>
</feature>
<feature type="strand" evidence="7">
    <location>
        <begin position="252"/>
        <end position="254"/>
    </location>
</feature>
<feature type="strand" evidence="7">
    <location>
        <begin position="260"/>
        <end position="267"/>
    </location>
</feature>
<accession>Q9I398</accession>